<sequence>MNKKNHEDSNSFKKYSAIKENDSVDVVLIGSGIMSATLGIYLKLLEPNWIIHSYERLNKVGQESSNAWNNAGTGHSAFCELNYTSINKDGSINISKAIKVNESFEISKQLWAYLIKEKILVNSSSFINTVPHMSFVWGENNINFLKKRFFYLKQNALFKDMLYSENYDIIKKWAPLIMEGRSINEKVAATRMEIGTDVNFGEITKQIFYYLKNKSNFFLYLNHDVIDIIRNKDKTWCLKVVDNILKKTIKINSKYVFIGSGGGALKLLQKSKIEQSIGYAGFPVGGQFLVTKNKKLTNNHQAKVYGKSPIGAPPMSVPHIDTRIINGEKVLLFGPFATFSSKFLKNGSYFDLFSSLTKENIIPILQVGINNFNLVKYLINQLLKSKRGKFNDLCKYLPTAKMKDWSLITAGQRVQIIKKDIEKGGILEFGTEIINSKDCTLSALLGASPGASTSASTMLDLLKIMFYDKINKSEWKSKLNKIFISYNKKIHESYEYTLEIRNYTSKILSL</sequence>
<accession>Q8D1V2</accession>
<dbReference type="EC" id="1.1.5.4" evidence="1"/>
<dbReference type="EMBL" id="BA000021">
    <property type="protein sequence ID" value="BAC24750.1"/>
    <property type="molecule type" value="Genomic_DNA"/>
</dbReference>
<dbReference type="SMR" id="Q8D1V2"/>
<dbReference type="STRING" id="36870.gene:10369122"/>
<dbReference type="KEGG" id="wbr:yojH"/>
<dbReference type="eggNOG" id="COG0579">
    <property type="taxonomic scope" value="Bacteria"/>
</dbReference>
<dbReference type="HOGENOM" id="CLU_028151_0_0_6"/>
<dbReference type="OrthoDB" id="9763983at2"/>
<dbReference type="UniPathway" id="UPA00223">
    <property type="reaction ID" value="UER01008"/>
</dbReference>
<dbReference type="Proteomes" id="UP000000562">
    <property type="component" value="Chromosome"/>
</dbReference>
<dbReference type="GO" id="GO:0047545">
    <property type="term" value="F:2-hydroxyglutarate dehydrogenase activity"/>
    <property type="evidence" value="ECO:0007669"/>
    <property type="project" value="TreeGrafter"/>
</dbReference>
<dbReference type="GO" id="GO:0008924">
    <property type="term" value="F:L-malate dehydrogenase (quinone) activity"/>
    <property type="evidence" value="ECO:0007669"/>
    <property type="project" value="UniProtKB-UniRule"/>
</dbReference>
<dbReference type="GO" id="GO:0006099">
    <property type="term" value="P:tricarboxylic acid cycle"/>
    <property type="evidence" value="ECO:0007669"/>
    <property type="project" value="UniProtKB-UniRule"/>
</dbReference>
<dbReference type="HAMAP" id="MF_00212">
    <property type="entry name" value="MQO"/>
    <property type="match status" value="1"/>
</dbReference>
<dbReference type="InterPro" id="IPR036188">
    <property type="entry name" value="FAD/NAD-bd_sf"/>
</dbReference>
<dbReference type="InterPro" id="IPR006231">
    <property type="entry name" value="MQO"/>
</dbReference>
<dbReference type="NCBIfam" id="TIGR01320">
    <property type="entry name" value="mal_quin_oxido"/>
    <property type="match status" value="1"/>
</dbReference>
<dbReference type="NCBIfam" id="NF003603">
    <property type="entry name" value="PRK05257.1-1"/>
    <property type="match status" value="1"/>
</dbReference>
<dbReference type="NCBIfam" id="NF003605">
    <property type="entry name" value="PRK05257.1-4"/>
    <property type="match status" value="1"/>
</dbReference>
<dbReference type="NCBIfam" id="NF003606">
    <property type="entry name" value="PRK05257.2-1"/>
    <property type="match status" value="1"/>
</dbReference>
<dbReference type="NCBIfam" id="NF003611">
    <property type="entry name" value="PRK05257.3-2"/>
    <property type="match status" value="1"/>
</dbReference>
<dbReference type="NCBIfam" id="NF009875">
    <property type="entry name" value="PRK13339.1"/>
    <property type="match status" value="1"/>
</dbReference>
<dbReference type="PANTHER" id="PTHR43104">
    <property type="entry name" value="L-2-HYDROXYGLUTARATE DEHYDROGENASE, MITOCHONDRIAL"/>
    <property type="match status" value="1"/>
</dbReference>
<dbReference type="PANTHER" id="PTHR43104:SF2">
    <property type="entry name" value="L-2-HYDROXYGLUTARATE DEHYDROGENASE, MITOCHONDRIAL"/>
    <property type="match status" value="1"/>
</dbReference>
<dbReference type="Pfam" id="PF06039">
    <property type="entry name" value="Mqo"/>
    <property type="match status" value="1"/>
</dbReference>
<dbReference type="SUPFAM" id="SSF51905">
    <property type="entry name" value="FAD/NAD(P)-binding domain"/>
    <property type="match status" value="1"/>
</dbReference>
<comment type="catalytic activity">
    <reaction evidence="1">
        <text>(S)-malate + a quinone = a quinol + oxaloacetate</text>
        <dbReference type="Rhea" id="RHEA:46012"/>
        <dbReference type="ChEBI" id="CHEBI:15589"/>
        <dbReference type="ChEBI" id="CHEBI:16452"/>
        <dbReference type="ChEBI" id="CHEBI:24646"/>
        <dbReference type="ChEBI" id="CHEBI:132124"/>
        <dbReference type="EC" id="1.1.5.4"/>
    </reaction>
</comment>
<comment type="cofactor">
    <cofactor evidence="1">
        <name>FAD</name>
        <dbReference type="ChEBI" id="CHEBI:57692"/>
    </cofactor>
</comment>
<comment type="pathway">
    <text evidence="1">Carbohydrate metabolism; tricarboxylic acid cycle; oxaloacetate from (S)-malate (quinone route): step 1/1.</text>
</comment>
<comment type="similarity">
    <text evidence="1">Belongs to the MQO family.</text>
</comment>
<organism>
    <name type="scientific">Wigglesworthia glossinidia brevipalpis</name>
    <dbReference type="NCBI Taxonomy" id="36870"/>
    <lineage>
        <taxon>Bacteria</taxon>
        <taxon>Pseudomonadati</taxon>
        <taxon>Pseudomonadota</taxon>
        <taxon>Gammaproteobacteria</taxon>
        <taxon>Enterobacterales</taxon>
        <taxon>Erwiniaceae</taxon>
        <taxon>Wigglesworthia</taxon>
    </lineage>
</organism>
<protein>
    <recommendedName>
        <fullName evidence="1">Probable malate:quinone oxidoreductase</fullName>
        <ecNumber evidence="1">1.1.5.4</ecNumber>
    </recommendedName>
    <alternativeName>
        <fullName evidence="1">MQO</fullName>
    </alternativeName>
    <alternativeName>
        <fullName evidence="1">Malate dehydrogenase [quinone]</fullName>
    </alternativeName>
</protein>
<gene>
    <name evidence="1" type="primary">mqo</name>
    <name type="ordered locus">WIGBR6040</name>
</gene>
<name>MQO_WIGBR</name>
<reference key="1">
    <citation type="journal article" date="2002" name="Nat. Genet.">
        <title>Genome sequence of the endocellular obligate symbiont of tsetse flies, Wigglesworthia glossinidia.</title>
        <authorList>
            <person name="Akman L."/>
            <person name="Yamashita A."/>
            <person name="Watanabe H."/>
            <person name="Oshima K."/>
            <person name="Shiba T."/>
            <person name="Hattori M."/>
            <person name="Aksoy S."/>
        </authorList>
    </citation>
    <scope>NUCLEOTIDE SEQUENCE [LARGE SCALE GENOMIC DNA]</scope>
</reference>
<feature type="chain" id="PRO_0000128758" description="Probable malate:quinone oxidoreductase">
    <location>
        <begin position="1"/>
        <end position="510"/>
    </location>
</feature>
<evidence type="ECO:0000255" key="1">
    <source>
        <dbReference type="HAMAP-Rule" id="MF_00212"/>
    </source>
</evidence>
<keyword id="KW-0274">FAD</keyword>
<keyword id="KW-0285">Flavoprotein</keyword>
<keyword id="KW-0560">Oxidoreductase</keyword>
<keyword id="KW-1185">Reference proteome</keyword>
<keyword id="KW-0816">Tricarboxylic acid cycle</keyword>
<proteinExistence type="inferred from homology"/>